<dbReference type="EC" id="3.1.6.-"/>
<dbReference type="EMBL" id="AABR03109797">
    <property type="status" value="NOT_ANNOTATED_CDS"/>
    <property type="molecule type" value="Genomic_DNA"/>
</dbReference>
<dbReference type="EMBL" id="BN000739">
    <property type="protein sequence ID" value="CAI84985.1"/>
    <property type="molecule type" value="mRNA"/>
</dbReference>
<dbReference type="RefSeq" id="NP_001041346.1">
    <property type="nucleotide sequence ID" value="NM_001047881.2"/>
</dbReference>
<dbReference type="SMR" id="Q32KJ8"/>
<dbReference type="FunCoup" id="Q32KJ8">
    <property type="interactions" value="3"/>
</dbReference>
<dbReference type="STRING" id="10116.ENSRNOP00000033542"/>
<dbReference type="GlyCosmos" id="Q32KJ8">
    <property type="glycosylation" value="4 sites, No reported glycans"/>
</dbReference>
<dbReference type="GlyGen" id="Q32KJ8">
    <property type="glycosylation" value="4 sites"/>
</dbReference>
<dbReference type="iPTMnet" id="Q32KJ8"/>
<dbReference type="PhosphoSitePlus" id="Q32KJ8"/>
<dbReference type="PaxDb" id="10116-ENSRNOP00000033542"/>
<dbReference type="Ensembl" id="ENSRNOT00000030966.5">
    <property type="protein sequence ID" value="ENSRNOP00000033542.4"/>
    <property type="gene ID" value="ENSRNOG00000026060.5"/>
</dbReference>
<dbReference type="GeneID" id="307404"/>
<dbReference type="KEGG" id="rno:307404"/>
<dbReference type="UCSC" id="RGD:1310242">
    <property type="organism name" value="rat"/>
</dbReference>
<dbReference type="AGR" id="RGD:1310242"/>
<dbReference type="CTD" id="340075"/>
<dbReference type="RGD" id="1310242">
    <property type="gene designation" value="Arsi"/>
</dbReference>
<dbReference type="eggNOG" id="KOG3867">
    <property type="taxonomic scope" value="Eukaryota"/>
</dbReference>
<dbReference type="GeneTree" id="ENSGT00940000157656"/>
<dbReference type="HOGENOM" id="CLU_006332_10_1_1"/>
<dbReference type="InParanoid" id="Q32KJ8"/>
<dbReference type="OMA" id="WDWMKPS"/>
<dbReference type="OrthoDB" id="103349at2759"/>
<dbReference type="PhylomeDB" id="Q32KJ8"/>
<dbReference type="TreeFam" id="TF314186"/>
<dbReference type="Reactome" id="R-RNO-1663150">
    <property type="pathway name" value="The activation of arylsulfatases"/>
</dbReference>
<dbReference type="Reactome" id="R-RNO-9840310">
    <property type="pathway name" value="Glycosphingolipid catabolism"/>
</dbReference>
<dbReference type="PRO" id="PR:Q32KJ8"/>
<dbReference type="Proteomes" id="UP000002494">
    <property type="component" value="Chromosome 18"/>
</dbReference>
<dbReference type="Bgee" id="ENSRNOG00000026060">
    <property type="expression patterns" value="Expressed in esophagus and 15 other cell types or tissues"/>
</dbReference>
<dbReference type="GO" id="GO:0005783">
    <property type="term" value="C:endoplasmic reticulum"/>
    <property type="evidence" value="ECO:0007669"/>
    <property type="project" value="UniProtKB-SubCell"/>
</dbReference>
<dbReference type="GO" id="GO:0005576">
    <property type="term" value="C:extracellular region"/>
    <property type="evidence" value="ECO:0007669"/>
    <property type="project" value="UniProtKB-SubCell"/>
</dbReference>
<dbReference type="GO" id="GO:0046872">
    <property type="term" value="F:metal ion binding"/>
    <property type="evidence" value="ECO:0007669"/>
    <property type="project" value="UniProtKB-KW"/>
</dbReference>
<dbReference type="GO" id="GO:0008484">
    <property type="term" value="F:sulfuric ester hydrolase activity"/>
    <property type="evidence" value="ECO:0007669"/>
    <property type="project" value="InterPro"/>
</dbReference>
<dbReference type="CDD" id="cd16029">
    <property type="entry name" value="4-S"/>
    <property type="match status" value="1"/>
</dbReference>
<dbReference type="FunFam" id="3.30.1120.10:FF:000002">
    <property type="entry name" value="Arylsulfatase family member J"/>
    <property type="match status" value="1"/>
</dbReference>
<dbReference type="FunFam" id="3.40.720.10:FF:000007">
    <property type="entry name" value="Arylsulfatase family, member J"/>
    <property type="match status" value="1"/>
</dbReference>
<dbReference type="Gene3D" id="3.30.1120.10">
    <property type="match status" value="1"/>
</dbReference>
<dbReference type="Gene3D" id="3.40.720.10">
    <property type="entry name" value="Alkaline Phosphatase, subunit A"/>
    <property type="match status" value="1"/>
</dbReference>
<dbReference type="InterPro" id="IPR017850">
    <property type="entry name" value="Alkaline_phosphatase_core_sf"/>
</dbReference>
<dbReference type="InterPro" id="IPR047115">
    <property type="entry name" value="ARSB"/>
</dbReference>
<dbReference type="InterPro" id="IPR024607">
    <property type="entry name" value="Sulfatase_CS"/>
</dbReference>
<dbReference type="InterPro" id="IPR000917">
    <property type="entry name" value="Sulfatase_N"/>
</dbReference>
<dbReference type="PANTHER" id="PTHR10342">
    <property type="entry name" value="ARYLSULFATASE"/>
    <property type="match status" value="1"/>
</dbReference>
<dbReference type="PANTHER" id="PTHR10342:SF68">
    <property type="entry name" value="ARYLSULFATASE I"/>
    <property type="match status" value="1"/>
</dbReference>
<dbReference type="Pfam" id="PF00884">
    <property type="entry name" value="Sulfatase"/>
    <property type="match status" value="1"/>
</dbReference>
<dbReference type="SUPFAM" id="SSF53649">
    <property type="entry name" value="Alkaline phosphatase-like"/>
    <property type="match status" value="1"/>
</dbReference>
<dbReference type="PROSITE" id="PS00523">
    <property type="entry name" value="SULFATASE_1"/>
    <property type="match status" value="1"/>
</dbReference>
<dbReference type="PROSITE" id="PS00149">
    <property type="entry name" value="SULFATASE_2"/>
    <property type="match status" value="1"/>
</dbReference>
<name>ARSI_RAT</name>
<reference key="1">
    <citation type="journal article" date="2004" name="Nature">
        <title>Genome sequence of the Brown Norway rat yields insights into mammalian evolution.</title>
        <authorList>
            <person name="Gibbs R.A."/>
            <person name="Weinstock G.M."/>
            <person name="Metzker M.L."/>
            <person name="Muzny D.M."/>
            <person name="Sodergren E.J."/>
            <person name="Scherer S."/>
            <person name="Scott G."/>
            <person name="Steffen D."/>
            <person name="Worley K.C."/>
            <person name="Burch P.E."/>
            <person name="Okwuonu G."/>
            <person name="Hines S."/>
            <person name="Lewis L."/>
            <person name="Deramo C."/>
            <person name="Delgado O."/>
            <person name="Dugan-Rocha S."/>
            <person name="Miner G."/>
            <person name="Morgan M."/>
            <person name="Hawes A."/>
            <person name="Gill R."/>
            <person name="Holt R.A."/>
            <person name="Adams M.D."/>
            <person name="Amanatides P.G."/>
            <person name="Baden-Tillson H."/>
            <person name="Barnstead M."/>
            <person name="Chin S."/>
            <person name="Evans C.A."/>
            <person name="Ferriera S."/>
            <person name="Fosler C."/>
            <person name="Glodek A."/>
            <person name="Gu Z."/>
            <person name="Jennings D."/>
            <person name="Kraft C.L."/>
            <person name="Nguyen T."/>
            <person name="Pfannkoch C.M."/>
            <person name="Sitter C."/>
            <person name="Sutton G.G."/>
            <person name="Venter J.C."/>
            <person name="Woodage T."/>
            <person name="Smith D."/>
            <person name="Lee H.-M."/>
            <person name="Gustafson E."/>
            <person name="Cahill P."/>
            <person name="Kana A."/>
            <person name="Doucette-Stamm L."/>
            <person name="Weinstock K."/>
            <person name="Fechtel K."/>
            <person name="Weiss R.B."/>
            <person name="Dunn D.M."/>
            <person name="Green E.D."/>
            <person name="Blakesley R.W."/>
            <person name="Bouffard G.G."/>
            <person name="De Jong P.J."/>
            <person name="Osoegawa K."/>
            <person name="Zhu B."/>
            <person name="Marra M."/>
            <person name="Schein J."/>
            <person name="Bosdet I."/>
            <person name="Fjell C."/>
            <person name="Jones S."/>
            <person name="Krzywinski M."/>
            <person name="Mathewson C."/>
            <person name="Siddiqui A."/>
            <person name="Wye N."/>
            <person name="McPherson J."/>
            <person name="Zhao S."/>
            <person name="Fraser C.M."/>
            <person name="Shetty J."/>
            <person name="Shatsman S."/>
            <person name="Geer K."/>
            <person name="Chen Y."/>
            <person name="Abramzon S."/>
            <person name="Nierman W.C."/>
            <person name="Havlak P.H."/>
            <person name="Chen R."/>
            <person name="Durbin K.J."/>
            <person name="Egan A."/>
            <person name="Ren Y."/>
            <person name="Song X.-Z."/>
            <person name="Li B."/>
            <person name="Liu Y."/>
            <person name="Qin X."/>
            <person name="Cawley S."/>
            <person name="Cooney A.J."/>
            <person name="D'Souza L.M."/>
            <person name="Martin K."/>
            <person name="Wu J.Q."/>
            <person name="Gonzalez-Garay M.L."/>
            <person name="Jackson A.R."/>
            <person name="Kalafus K.J."/>
            <person name="McLeod M.P."/>
            <person name="Milosavljevic A."/>
            <person name="Virk D."/>
            <person name="Volkov A."/>
            <person name="Wheeler D.A."/>
            <person name="Zhang Z."/>
            <person name="Bailey J.A."/>
            <person name="Eichler E.E."/>
            <person name="Tuzun E."/>
            <person name="Birney E."/>
            <person name="Mongin E."/>
            <person name="Ureta-Vidal A."/>
            <person name="Woodwark C."/>
            <person name="Zdobnov E."/>
            <person name="Bork P."/>
            <person name="Suyama M."/>
            <person name="Torrents D."/>
            <person name="Alexandersson M."/>
            <person name="Trask B.J."/>
            <person name="Young J.M."/>
            <person name="Huang H."/>
            <person name="Wang H."/>
            <person name="Xing H."/>
            <person name="Daniels S."/>
            <person name="Gietzen D."/>
            <person name="Schmidt J."/>
            <person name="Stevens K."/>
            <person name="Vitt U."/>
            <person name="Wingrove J."/>
            <person name="Camara F."/>
            <person name="Mar Alba M."/>
            <person name="Abril J.F."/>
            <person name="Guigo R."/>
            <person name="Smit A."/>
            <person name="Dubchak I."/>
            <person name="Rubin E.M."/>
            <person name="Couronne O."/>
            <person name="Poliakov A."/>
            <person name="Huebner N."/>
            <person name="Ganten D."/>
            <person name="Goesele C."/>
            <person name="Hummel O."/>
            <person name="Kreitler T."/>
            <person name="Lee Y.-A."/>
            <person name="Monti J."/>
            <person name="Schulz H."/>
            <person name="Zimdahl H."/>
            <person name="Himmelbauer H."/>
            <person name="Lehrach H."/>
            <person name="Jacob H.J."/>
            <person name="Bromberg S."/>
            <person name="Gullings-Handley J."/>
            <person name="Jensen-Seaman M.I."/>
            <person name="Kwitek A.E."/>
            <person name="Lazar J."/>
            <person name="Pasko D."/>
            <person name="Tonellato P.J."/>
            <person name="Twigger S."/>
            <person name="Ponting C.P."/>
            <person name="Duarte J.M."/>
            <person name="Rice S."/>
            <person name="Goodstadt L."/>
            <person name="Beatson S.A."/>
            <person name="Emes R.D."/>
            <person name="Winter E.E."/>
            <person name="Webber C."/>
            <person name="Brandt P."/>
            <person name="Nyakatura G."/>
            <person name="Adetobi M."/>
            <person name="Chiaromonte F."/>
            <person name="Elnitski L."/>
            <person name="Eswara P."/>
            <person name="Hardison R.C."/>
            <person name="Hou M."/>
            <person name="Kolbe D."/>
            <person name="Makova K."/>
            <person name="Miller W."/>
            <person name="Nekrutenko A."/>
            <person name="Riemer C."/>
            <person name="Schwartz S."/>
            <person name="Taylor J."/>
            <person name="Yang S."/>
            <person name="Zhang Y."/>
            <person name="Lindpaintner K."/>
            <person name="Andrews T.D."/>
            <person name="Caccamo M."/>
            <person name="Clamp M."/>
            <person name="Clarke L."/>
            <person name="Curwen V."/>
            <person name="Durbin R.M."/>
            <person name="Eyras E."/>
            <person name="Searle S.M."/>
            <person name="Cooper G.M."/>
            <person name="Batzoglou S."/>
            <person name="Brudno M."/>
            <person name="Sidow A."/>
            <person name="Stone E.A."/>
            <person name="Payseur B.A."/>
            <person name="Bourque G."/>
            <person name="Lopez-Otin C."/>
            <person name="Puente X.S."/>
            <person name="Chakrabarti K."/>
            <person name="Chatterji S."/>
            <person name="Dewey C."/>
            <person name="Pachter L."/>
            <person name="Bray N."/>
            <person name="Yap V.B."/>
            <person name="Caspi A."/>
            <person name="Tesler G."/>
            <person name="Pevzner P.A."/>
            <person name="Haussler D."/>
            <person name="Roskin K.M."/>
            <person name="Baertsch R."/>
            <person name="Clawson H."/>
            <person name="Furey T.S."/>
            <person name="Hinrichs A.S."/>
            <person name="Karolchik D."/>
            <person name="Kent W.J."/>
            <person name="Rosenbloom K.R."/>
            <person name="Trumbower H."/>
            <person name="Weirauch M."/>
            <person name="Cooper D.N."/>
            <person name="Stenson P.D."/>
            <person name="Ma B."/>
            <person name="Brent M."/>
            <person name="Arumugam M."/>
            <person name="Shteynberg D."/>
            <person name="Copley R.R."/>
            <person name="Taylor M.S."/>
            <person name="Riethman H."/>
            <person name="Mudunuri U."/>
            <person name="Peterson J."/>
            <person name="Guyer M."/>
            <person name="Felsenfeld A."/>
            <person name="Old S."/>
            <person name="Mockrin S."/>
            <person name="Collins F.S."/>
        </authorList>
    </citation>
    <scope>NUCLEOTIDE SEQUENCE [LARGE SCALE GENOMIC DNA]</scope>
    <source>
        <strain>Brown Norway</strain>
    </source>
</reference>
<reference key="2">
    <citation type="journal article" date="2005" name="Hum. Mol. Genet.">
        <title>Sulfatases and sulfatase modifying factors: an exclusive and promiscuous relationship.</title>
        <authorList>
            <person name="Sardiello M."/>
            <person name="Annunziata I."/>
            <person name="Roma G."/>
            <person name="Ballabio A."/>
        </authorList>
    </citation>
    <scope>IDENTIFICATION</scope>
</reference>
<proteinExistence type="evidence at transcript level"/>
<evidence type="ECO:0000250" key="1">
    <source>
        <dbReference type="UniProtKB" id="P15289"/>
    </source>
</evidence>
<evidence type="ECO:0000250" key="2">
    <source>
        <dbReference type="UniProtKB" id="Q5FYB1"/>
    </source>
</evidence>
<evidence type="ECO:0000255" key="3"/>
<evidence type="ECO:0000256" key="4">
    <source>
        <dbReference type="SAM" id="MobiDB-lite"/>
    </source>
</evidence>
<evidence type="ECO:0000305" key="5"/>
<organism>
    <name type="scientific">Rattus norvegicus</name>
    <name type="common">Rat</name>
    <dbReference type="NCBI Taxonomy" id="10116"/>
    <lineage>
        <taxon>Eukaryota</taxon>
        <taxon>Metazoa</taxon>
        <taxon>Chordata</taxon>
        <taxon>Craniata</taxon>
        <taxon>Vertebrata</taxon>
        <taxon>Euteleostomi</taxon>
        <taxon>Mammalia</taxon>
        <taxon>Eutheria</taxon>
        <taxon>Euarchontoglires</taxon>
        <taxon>Glires</taxon>
        <taxon>Rodentia</taxon>
        <taxon>Myomorpha</taxon>
        <taxon>Muroidea</taxon>
        <taxon>Muridae</taxon>
        <taxon>Murinae</taxon>
        <taxon>Rattus</taxon>
    </lineage>
</organism>
<protein>
    <recommendedName>
        <fullName>Arylsulfatase I</fullName>
        <shortName>ASI</shortName>
        <ecNumber>3.1.6.-</ecNumber>
    </recommendedName>
</protein>
<keyword id="KW-0106">Calcium</keyword>
<keyword id="KW-0256">Endoplasmic reticulum</keyword>
<keyword id="KW-0325">Glycoprotein</keyword>
<keyword id="KW-0378">Hydrolase</keyword>
<keyword id="KW-0479">Metal-binding</keyword>
<keyword id="KW-1185">Reference proteome</keyword>
<keyword id="KW-0964">Secreted</keyword>
<keyword id="KW-0732">Signal</keyword>
<gene>
    <name type="primary">Arsi</name>
</gene>
<sequence>MHALSGFSLVSLLSLGYLSWDWAKPGLVADGPAEAEDQPSAAPPQPPHIIFILTDDQGYHDVGYHGSDIETPTLDRLAAEGVKLENYYIQPICTPSRSQLLTGRYQIHTGLQHSIIRPRQPNCLPLDQVTLPQKLQEAGYSTHMVGKWHLGFYRKECLPTRRGFDTFLGSLTGNVDYYTYDNCDGPGVCGFDLHEGESVAWGLSGQYSTMLYAQRASHILASHSPQKPLFLYVAFQAVHTPLQSPREYLYRYRTMGNVARRKYAAMVTCMDEAVRNITWALKRYGFYNNSVIIFSSDNGGQTFSGGSNWPLRGRKGTYWEGGVRGLGFVHSPLLKKKRRTSRALVHITDWYPTLVGLAGGTTSAADGLDGYDVWPAISEGRASPRTEILHNIDPLYNHARHGSLEGGFGIWNTAVQAAIRVGEWKLLTGDPGYGDWIPPQTLASFPGSWWNLERMASIRQAVWLFNISADPYEREDLADQRPDVVRTLLARLADYNRTAIPVRYPAANPRAHPDFNGGAWGPWASDEDEEEEDEEEEGRARSFPRGRRKKKCKICKLRSFFRKLNTRLMSHRI</sequence>
<accession>Q32KJ8</accession>
<comment type="function">
    <text evidence="2">Displays arylsulfatase activity at neutral pH, when co-expressed with SUMF1; arylsulfatase activity is measured in the secretion medium of retinal cell line, but no activity is recorded when measured in cell extracts.</text>
</comment>
<comment type="cofactor">
    <cofactor evidence="1">
        <name>Ca(2+)</name>
        <dbReference type="ChEBI" id="CHEBI:29108"/>
    </cofactor>
    <text evidence="1">Binds 1 Ca(2+) ion per subunit.</text>
</comment>
<comment type="subcellular location">
    <subcellularLocation>
        <location evidence="2">Secreted</location>
    </subcellularLocation>
    <subcellularLocation>
        <location evidence="2">Endoplasmic reticulum</location>
    </subcellularLocation>
    <text evidence="2">Localized in the intracellular granular structures.</text>
</comment>
<comment type="PTM">
    <text evidence="2">The oxidation of Cys-93 residue to 3-oxoalanine (also known as C(alpha)-formylglycine) by SUMF1/Sulfatase-modifying factor 1, seems critical for catalytic activity.</text>
</comment>
<comment type="similarity">
    <text evidence="5">Belongs to the sulfatase family.</text>
</comment>
<feature type="signal peptide" evidence="3">
    <location>
        <begin position="1"/>
        <end position="23"/>
    </location>
</feature>
<feature type="chain" id="PRO_0000356285" description="Arylsulfatase I">
    <location>
        <begin position="24"/>
        <end position="573"/>
    </location>
</feature>
<feature type="region of interest" description="Disordered" evidence="4">
    <location>
        <begin position="506"/>
        <end position="550"/>
    </location>
</feature>
<feature type="compositionally biased region" description="Acidic residues" evidence="4">
    <location>
        <begin position="525"/>
        <end position="537"/>
    </location>
</feature>
<feature type="active site" description="Nucleophile" evidence="1">
    <location>
        <position position="93"/>
    </location>
</feature>
<feature type="active site" evidence="1">
    <location>
        <position position="149"/>
    </location>
</feature>
<feature type="binding site" evidence="1">
    <location>
        <position position="55"/>
    </location>
    <ligand>
        <name>Ca(2+)</name>
        <dbReference type="ChEBI" id="CHEBI:29108"/>
    </ligand>
</feature>
<feature type="binding site" evidence="1">
    <location>
        <position position="56"/>
    </location>
    <ligand>
        <name>Ca(2+)</name>
        <dbReference type="ChEBI" id="CHEBI:29108"/>
    </ligand>
</feature>
<feature type="binding site" description="via 3-oxoalanine" evidence="1">
    <location>
        <position position="93"/>
    </location>
    <ligand>
        <name>Ca(2+)</name>
        <dbReference type="ChEBI" id="CHEBI:29108"/>
    </ligand>
</feature>
<feature type="binding site" evidence="1">
    <location>
        <position position="147"/>
    </location>
    <ligand>
        <name>substrate</name>
    </ligand>
</feature>
<feature type="binding site" evidence="1">
    <location>
        <position position="239"/>
    </location>
    <ligand>
        <name>substrate</name>
    </ligand>
</feature>
<feature type="binding site" evidence="1">
    <location>
        <position position="297"/>
    </location>
    <ligand>
        <name>Ca(2+)</name>
        <dbReference type="ChEBI" id="CHEBI:29108"/>
    </ligand>
</feature>
<feature type="binding site" evidence="1">
    <location>
        <position position="298"/>
    </location>
    <ligand>
        <name>Ca(2+)</name>
        <dbReference type="ChEBI" id="CHEBI:29108"/>
    </ligand>
</feature>
<feature type="binding site" evidence="1">
    <location>
        <position position="315"/>
    </location>
    <ligand>
        <name>substrate</name>
    </ligand>
</feature>
<feature type="modified residue" description="3-oxoalanine (Cys)" evidence="2">
    <location>
        <position position="93"/>
    </location>
</feature>
<feature type="glycosylation site" description="N-linked (GlcNAc...) asparagine" evidence="3">
    <location>
        <position position="276"/>
    </location>
</feature>
<feature type="glycosylation site" description="N-linked (GlcNAc...) asparagine" evidence="3">
    <location>
        <position position="288"/>
    </location>
</feature>
<feature type="glycosylation site" description="N-linked (GlcNAc...) asparagine" evidence="3">
    <location>
        <position position="466"/>
    </location>
</feature>
<feature type="glycosylation site" description="N-linked (GlcNAc...) asparagine" evidence="3">
    <location>
        <position position="496"/>
    </location>
</feature>